<organism>
    <name type="scientific">Methanococcoides burtonii (strain DSM 6242 / NBRC 107633 / OCM 468 / ACE-M)</name>
    <dbReference type="NCBI Taxonomy" id="259564"/>
    <lineage>
        <taxon>Archaea</taxon>
        <taxon>Methanobacteriati</taxon>
        <taxon>Methanobacteriota</taxon>
        <taxon>Stenosarchaea group</taxon>
        <taxon>Methanomicrobia</taxon>
        <taxon>Methanosarcinales</taxon>
        <taxon>Methanosarcinaceae</taxon>
        <taxon>Methanococcoides</taxon>
    </lineage>
</organism>
<keyword id="KW-0067">ATP-binding</keyword>
<keyword id="KW-0436">Ligase</keyword>
<keyword id="KW-0547">Nucleotide-binding</keyword>
<keyword id="KW-0648">Protein biosynthesis</keyword>
<name>GATB_METBU</name>
<feature type="chain" id="PRO_1000015993" description="Aspartyl/glutamyl-tRNA(Asn/Gln) amidotransferase subunit B">
    <location>
        <begin position="1"/>
        <end position="473"/>
    </location>
</feature>
<comment type="function">
    <text evidence="1">Allows the formation of correctly charged Asn-tRNA(Asn) or Gln-tRNA(Gln) through the transamidation of misacylated Asp-tRNA(Asn) or Glu-tRNA(Gln) in organisms which lack either or both of asparaginyl-tRNA or glutaminyl-tRNA synthetases. The reaction takes place in the presence of glutamine and ATP through an activated phospho-Asp-tRNA(Asn) or phospho-Glu-tRNA(Gln).</text>
</comment>
<comment type="catalytic activity">
    <reaction evidence="1">
        <text>L-glutamyl-tRNA(Gln) + L-glutamine + ATP + H2O = L-glutaminyl-tRNA(Gln) + L-glutamate + ADP + phosphate + H(+)</text>
        <dbReference type="Rhea" id="RHEA:17521"/>
        <dbReference type="Rhea" id="RHEA-COMP:9681"/>
        <dbReference type="Rhea" id="RHEA-COMP:9684"/>
        <dbReference type="ChEBI" id="CHEBI:15377"/>
        <dbReference type="ChEBI" id="CHEBI:15378"/>
        <dbReference type="ChEBI" id="CHEBI:29985"/>
        <dbReference type="ChEBI" id="CHEBI:30616"/>
        <dbReference type="ChEBI" id="CHEBI:43474"/>
        <dbReference type="ChEBI" id="CHEBI:58359"/>
        <dbReference type="ChEBI" id="CHEBI:78520"/>
        <dbReference type="ChEBI" id="CHEBI:78521"/>
        <dbReference type="ChEBI" id="CHEBI:456216"/>
    </reaction>
</comment>
<comment type="catalytic activity">
    <reaction evidence="1">
        <text>L-aspartyl-tRNA(Asn) + L-glutamine + ATP + H2O = L-asparaginyl-tRNA(Asn) + L-glutamate + ADP + phosphate + 2 H(+)</text>
        <dbReference type="Rhea" id="RHEA:14513"/>
        <dbReference type="Rhea" id="RHEA-COMP:9674"/>
        <dbReference type="Rhea" id="RHEA-COMP:9677"/>
        <dbReference type="ChEBI" id="CHEBI:15377"/>
        <dbReference type="ChEBI" id="CHEBI:15378"/>
        <dbReference type="ChEBI" id="CHEBI:29985"/>
        <dbReference type="ChEBI" id="CHEBI:30616"/>
        <dbReference type="ChEBI" id="CHEBI:43474"/>
        <dbReference type="ChEBI" id="CHEBI:58359"/>
        <dbReference type="ChEBI" id="CHEBI:78515"/>
        <dbReference type="ChEBI" id="CHEBI:78516"/>
        <dbReference type="ChEBI" id="CHEBI:456216"/>
    </reaction>
</comment>
<comment type="subunit">
    <text evidence="1">Heterotrimer of A, B and C subunits.</text>
</comment>
<comment type="similarity">
    <text evidence="1">Belongs to the GatB/GatE family. GatB subfamily.</text>
</comment>
<evidence type="ECO:0000255" key="1">
    <source>
        <dbReference type="HAMAP-Rule" id="MF_00121"/>
    </source>
</evidence>
<dbReference type="EC" id="6.3.5.-" evidence="1"/>
<dbReference type="EMBL" id="CP000300">
    <property type="protein sequence ID" value="ABE52554.1"/>
    <property type="molecule type" value="Genomic_DNA"/>
</dbReference>
<dbReference type="RefSeq" id="WP_011499697.1">
    <property type="nucleotide sequence ID" value="NC_007955.1"/>
</dbReference>
<dbReference type="SMR" id="Q12VH2"/>
<dbReference type="STRING" id="259564.Mbur_1654"/>
<dbReference type="GeneID" id="3997287"/>
<dbReference type="KEGG" id="mbu:Mbur_1654"/>
<dbReference type="HOGENOM" id="CLU_019240_0_0_2"/>
<dbReference type="OrthoDB" id="52755at2157"/>
<dbReference type="Proteomes" id="UP000001979">
    <property type="component" value="Chromosome"/>
</dbReference>
<dbReference type="GO" id="GO:0050566">
    <property type="term" value="F:asparaginyl-tRNA synthase (glutamine-hydrolyzing) activity"/>
    <property type="evidence" value="ECO:0007669"/>
    <property type="project" value="RHEA"/>
</dbReference>
<dbReference type="GO" id="GO:0005524">
    <property type="term" value="F:ATP binding"/>
    <property type="evidence" value="ECO:0007669"/>
    <property type="project" value="UniProtKB-KW"/>
</dbReference>
<dbReference type="GO" id="GO:0050567">
    <property type="term" value="F:glutaminyl-tRNA synthase (glutamine-hydrolyzing) activity"/>
    <property type="evidence" value="ECO:0007669"/>
    <property type="project" value="UniProtKB-UniRule"/>
</dbReference>
<dbReference type="GO" id="GO:0070681">
    <property type="term" value="P:glutaminyl-tRNAGln biosynthesis via transamidation"/>
    <property type="evidence" value="ECO:0007669"/>
    <property type="project" value="TreeGrafter"/>
</dbReference>
<dbReference type="GO" id="GO:0006412">
    <property type="term" value="P:translation"/>
    <property type="evidence" value="ECO:0007669"/>
    <property type="project" value="UniProtKB-UniRule"/>
</dbReference>
<dbReference type="FunFam" id="1.10.10.410:FF:000001">
    <property type="entry name" value="Aspartyl/glutamyl-tRNA(Asn/Gln) amidotransferase subunit B"/>
    <property type="match status" value="1"/>
</dbReference>
<dbReference type="Gene3D" id="1.10.10.410">
    <property type="match status" value="1"/>
</dbReference>
<dbReference type="Gene3D" id="1.10.150.380">
    <property type="entry name" value="GatB domain, N-terminal subdomain"/>
    <property type="match status" value="1"/>
</dbReference>
<dbReference type="HAMAP" id="MF_00121">
    <property type="entry name" value="GatB"/>
    <property type="match status" value="1"/>
</dbReference>
<dbReference type="InterPro" id="IPR017959">
    <property type="entry name" value="Asn/Gln-tRNA_amidoTrfase_suB/E"/>
</dbReference>
<dbReference type="InterPro" id="IPR006075">
    <property type="entry name" value="Asn/Gln-tRNA_Trfase_suB/E_cat"/>
</dbReference>
<dbReference type="InterPro" id="IPR018027">
    <property type="entry name" value="Asn/Gln_amidotransferase"/>
</dbReference>
<dbReference type="InterPro" id="IPR003789">
    <property type="entry name" value="Asn/Gln_tRNA_amidoTrase-B-like"/>
</dbReference>
<dbReference type="InterPro" id="IPR004413">
    <property type="entry name" value="GatB"/>
</dbReference>
<dbReference type="InterPro" id="IPR042114">
    <property type="entry name" value="GatB_C_1"/>
</dbReference>
<dbReference type="InterPro" id="IPR023168">
    <property type="entry name" value="GatB_Yqey_C_2"/>
</dbReference>
<dbReference type="InterPro" id="IPR017958">
    <property type="entry name" value="Gln-tRNA_amidoTrfase_suB_CS"/>
</dbReference>
<dbReference type="InterPro" id="IPR014746">
    <property type="entry name" value="Gln_synth/guanido_kin_cat_dom"/>
</dbReference>
<dbReference type="NCBIfam" id="TIGR00133">
    <property type="entry name" value="gatB"/>
    <property type="match status" value="1"/>
</dbReference>
<dbReference type="NCBIfam" id="NF004012">
    <property type="entry name" value="PRK05477.1-2"/>
    <property type="match status" value="1"/>
</dbReference>
<dbReference type="NCBIfam" id="NF004014">
    <property type="entry name" value="PRK05477.1-4"/>
    <property type="match status" value="1"/>
</dbReference>
<dbReference type="PANTHER" id="PTHR11659">
    <property type="entry name" value="GLUTAMYL-TRNA GLN AMIDOTRANSFERASE SUBUNIT B MITOCHONDRIAL AND PROKARYOTIC PET112-RELATED"/>
    <property type="match status" value="1"/>
</dbReference>
<dbReference type="PANTHER" id="PTHR11659:SF0">
    <property type="entry name" value="GLUTAMYL-TRNA(GLN) AMIDOTRANSFERASE SUBUNIT B, MITOCHONDRIAL"/>
    <property type="match status" value="1"/>
</dbReference>
<dbReference type="Pfam" id="PF02934">
    <property type="entry name" value="GatB_N"/>
    <property type="match status" value="1"/>
</dbReference>
<dbReference type="Pfam" id="PF02637">
    <property type="entry name" value="GatB_Yqey"/>
    <property type="match status" value="1"/>
</dbReference>
<dbReference type="SMART" id="SM00845">
    <property type="entry name" value="GatB_Yqey"/>
    <property type="match status" value="1"/>
</dbReference>
<dbReference type="SUPFAM" id="SSF89095">
    <property type="entry name" value="GatB/YqeY motif"/>
    <property type="match status" value="1"/>
</dbReference>
<dbReference type="SUPFAM" id="SSF55931">
    <property type="entry name" value="Glutamine synthetase/guanido kinase"/>
    <property type="match status" value="1"/>
</dbReference>
<dbReference type="PROSITE" id="PS01234">
    <property type="entry name" value="GATB"/>
    <property type="match status" value="1"/>
</dbReference>
<proteinExistence type="inferred from homology"/>
<gene>
    <name evidence="1" type="primary">gatB</name>
    <name type="ordered locus">Mbur_1654</name>
</gene>
<protein>
    <recommendedName>
        <fullName evidence="1">Aspartyl/glutamyl-tRNA(Asn/Gln) amidotransferase subunit B</fullName>
        <shortName evidence="1">Asp/Glu-ADT subunit B</shortName>
        <ecNumber evidence="1">6.3.5.-</ecNumber>
    </recommendedName>
</protein>
<reference key="1">
    <citation type="journal article" date="2009" name="ISME J.">
        <title>The genome sequence of the psychrophilic archaeon, Methanococcoides burtonii: the role of genome evolution in cold adaptation.</title>
        <authorList>
            <person name="Allen M.A."/>
            <person name="Lauro F.M."/>
            <person name="Williams T.J."/>
            <person name="Burg D."/>
            <person name="Siddiqui K.S."/>
            <person name="De Francisci D."/>
            <person name="Chong K.W."/>
            <person name="Pilak O."/>
            <person name="Chew H.H."/>
            <person name="De Maere M.Z."/>
            <person name="Ting L."/>
            <person name="Katrib M."/>
            <person name="Ng C."/>
            <person name="Sowers K.R."/>
            <person name="Galperin M.Y."/>
            <person name="Anderson I.J."/>
            <person name="Ivanova N."/>
            <person name="Dalin E."/>
            <person name="Martinez M."/>
            <person name="Lapidus A."/>
            <person name="Hauser L."/>
            <person name="Land M."/>
            <person name="Thomas T."/>
            <person name="Cavicchioli R."/>
        </authorList>
    </citation>
    <scope>NUCLEOTIDE SEQUENCE [LARGE SCALE GENOMIC DNA]</scope>
    <source>
        <strain>DSM 6242 / NBRC 107633 / OCM 468 / ACE-M</strain>
    </source>
</reference>
<accession>Q12VH2</accession>
<sequence length="473" mass="52756">MVYENPDGVMVGLEVHVQLNNLNTKMFCGCSTQYHDSEPNTHVCPVCMGLPGALPVINKRAVESAIKIGMALNCEVVEQTQFHRKNYYYPDLPKGFQTTQYDFPIVGNGKVVIEGEDGEHVVRITRAHMEEDPGKLVHIGSIDKSKGTLIDYNRSGMALIEIVSEPDMRSPKEARRYLDKLRNILDYLDVFNGDLEGSMRVDANVSVMGGQRAEVKNISSHKGAERAILYEIMRQKNLLRRGGEVVMETRHFDEARGVTISMRTKEGEHDYRYFPEPDLVPMRVSDWAPAIREELPELPDAKRARLISEYDITEMHAKALTSDIRVADFYEVVAAAVEPRVAGTWVADVLKGELNYRDLSVDSFTTDDIIQIIKLVVEDKVTEQSAVDVIRTILDDGGTPMEVVTEKGLLKVKGDVVTEAVSETIAENEAAVQDYLGGAEKSLNFLVGQVMKKTKGRADARQARELLVAALKS</sequence>